<protein>
    <recommendedName>
        <fullName evidence="12">NuA4 acetyltransferase complex subunit Tra2</fullName>
    </recommendedName>
    <alternativeName>
        <fullName>Transcription-associated protein 2</fullName>
    </alternativeName>
</protein>
<sequence length="3655" mass="420782">MEDGFEKSLSSSIELLKAESTEIEEKIKLTKILITKVSSISSDASQLYAELIPLLLDFLRNTEVNLYRNSSVNELKIEALTLIQSCAHRDEFKQYAQSCVLSFISLIKADNEEVAVFCLKVIMDIFKTFKFCIESTAQPFFDLVLELSTNLPYLIPSIFVENPKSNEEENTTLAFGSYLSTETSIIQQRVNSLAISTQPLELASQSFRVYVECPVIIVLILQAYRQAAFPGVQAIIPCFLKMVQIDVPIDIASYAMIEKDSSIDFIEFIRNKYQYRNFFMAQVKTLSFLAYILRTHPNTLSEKDIIPDIVIKLLRRCPFDMCFARKELLVATRHILSTNLKSLFVKKLDFLLDLNILLGNGVGTQKLLRPLAFSTLADLLHHVRDELNETQIRKSIMIYSTNMHDLTLSIGLQTMGARLILNMVDRMISLPSIPDAIFLLLSIFDSFVNKFSELNDSLDQFFKKKYEEEIKETKSPTRSSPRDLSSFSTSVNDGSFLFKNLMFGLRALMYGLRTCKSRCIEIGGEQFSGFLTNIKPFEAVTFQKLFFEVGKGFSYFRPEQVYLETFFCCEEESLDRPAISTLPRNKDEKDCLEVFATIFIHLEPSIFLKVFETNLPTFFDQLKKNLTLFHIPQFLLSNESTSSKFLNILLRFLLSRIEELGSSDIRHGSVLLRLFRLSFVTVSMFATENEPVLRPYVSEIIVKCMKLAPNSANSLNYYYLLRALFRGIGGGRFESLYKEVMPLLHALLEAFNSLLISARTPKEKDLFTELCLTIPVRLSLLLPYMSYLMRPLVMSLKSSQELVSQGLRTFELCLDNLTPDFLDPIMAPYIEDLMNALWSHLQPLPYNYNHSHTALKILGKLGGRNRKLLDRVQSLKNSPEPNNDFTLLLSIKGVKQPQLLHYTQYVDEAVNLLSSPSSDLEVKQQAFTYVCNISKLYVYKSDATNSLASSIRCTADKISKSNFDFRRPYSVIPSRMTGRSSFTQLSDDSDETIILASATYGLFFATTVDELREEAYFWLEKLAVNVIVHDIFYAFDVIQGNHSKFTTNLQKEVIISPHYFAHCLSEVVCNDNSKMGDAVKHVLKFMFSFLESIFENPERAFILPIFEVLLSDFRHKCYDPHWYKKYGGCFGLECLIEQDHSSKWLFDRQVDILTALFFTLKDTTSEVPTVCKDHVMDVLKQLFRKIYASKDTEIAPGILGHLVLELSNHNSVVRSSTQKLLSLLSELSNTPIVKLVSPFKERLLSPIFAKPLRALPFHIQIGHIDAVNYCISLGSELITFSDELIRLIHETTALAEADDDALIGIGKTSHFKNAALLIRLRVVCVELLSTCILKIDFNNPQHAHLREGIIVVFFKSLYAKSKELIEAASLGLKNALQEDQKLSKELLQTTLRPILYNISDYRRLSVAGLEGLGRLLRLLTNYFKVEIGRKLLDHLKALLENVDFQKVSSLPLFCQTEMKIVRALIDLFHLLPNNANRFMDELLICVVEFSLRLQRTFPNYFSEPLLKYVNRYPEDAWKFFMVRYDEAAFTSVFVELLRLKDSDPLLSVVKDNWLFFQTILTNEINTVTANRYSFALDSAIVILQRDPSFFKDKNDFFRGSMDAVLAISHLVENESILESMVFWNDLLVRTSTFLLEVYDLCIYNYDDGLKLLSCFHMYKNSLAKNLVSDLTAHLVKKIEEPDLENNVKLILNLILSKDYGFLLKENLAGILLTYLNQNVSSLEKCNQIFSIFYEVFFQHPSTNVYANDEGIKIGALQIISFFLKNVPEITVQHQTEMLKMCSLFGNSEDVMIKQLSIYVMSLFILRSQFPYELVNVVYMALLKSSPIEVRHLVKSSFDNIFSYIFSEEPESKKSPIWFELPLQVISSQSQNISQLLNVYDFISSHSDIFIEHRGRYVPILIDSLYKFGAIPNPNPEIRALSLGLIKVLLEWNDLQLKVDQKEIFSNNQKRAILSYLFRFVCLFSEPFTEGLCSEAISLLERLLSSGTWASLGMKLSFFTKSITHFDATDANSVMFANSLRTLSIVVGHSDSAWIEENLSDLKFLLEKSLENESVGVQSAIGNFVSTILTLSNTHPSIAGNPIFNDIWTSIASWTERRLQSCSQIEVTLPCVECFFKYKKDALHTLLPGFMRCFHKVAKEFLSLGSQPSGNSLNLQIVNAVDERVSILKSMIELGCSYISYLGDQRRWFLSALVQIIEKSSSYEICNYLLEIVRGWIMNSPVPVPTVKEKAALLLKMVTFEGRFSQNEQNDLFNKYLSFIADIYEMEPYKNSELTFRLEAVYLLGTRVANKKLKERFIKGLNSSFPSDLFSRFQFLLGSQHWESLSNTYWIVQLNIFLSRCFDLNQRCQFYKKPKLFSCFSIYCREFDEDLTSQAQDTEMLHNNLLKYGIIDFNQNSMLVSDFVLPVLSLQFSNSKIAEYLWRDFFNASVCSFTKDEIPLCIGSIISFLSREYHIRLLGKTPNVLETILTSIVSSDMPIPLPPHLLVYLSKTYGLHHYCILLLENSLQNNPGLSEDELTVYHKSCLDALSDIYYSLDEHDLYHGLWRRRANFLETEVATSHEQCHEWEKAQLVYEHAQLKVCTGSLPYSPTEHGFWLDHWILCAQKLNQWDVLFDFSKQEGCAELYLECAWRLSDWSTEQDTLEKATKSLSPFTSLRRHTADALLYLNKTQRKMGSVTEFSRIIDECMQFSLRRWQQLPKRVYQSHVSLLHHFQEIVELQEAFGIYSQLNDTNIHNIDNKLRDIKVVLQGWRERLPNVWDDIDIWSDLIAWRQSVFKSINKVFLPLVSIAQQSTNKSNTNSVSYLYRGYHELAWIINRFAHVARVHHLPEVCINQLTKIYTLPNIEIQEAFLKLREQAECHYESPSEMQLGLEVINNTNLMYFRNRQKAEFFTLKGMFQNRLGEKDEANQAFATAVQIDIGSGKAWSEWGLYHDELFQANPQEIHHACNAVSCFLQASSLLSSSNSKPLLTRVLWLLSVDDSHGSVSEVVSSFKSEIPTWNWIPFIPQLLSALSHRESIHARAILIQIAKTYPQSLHFQLRTAYEDFLMLKKQQAANVLRGNSRLRENDSSSDNKSKDLSPSGSFSSVSQFNSKNGSPSSIDSSEKHQISTVKPAWELIADVTSILKTAYPLLALTMETMVDQIHTRLKSFPEEDAYRLIVALLNDGLQYISRLGVVSKNTFQLPMSQANIQRFAENVLPVSVREAFLRDFVETKLDLLTYVDKLRMWRKKFENILDQRPKFLHLEQCSLYLSEFQHQKFDEVEIPGQYLLDKNNNNDFVRLERFVPNVDLVRGHTMCYKRLTLRGYDGKLYPFALQYPATRHSRREERMLQLLGTFNTVLRSKIEIQNRNFSFQIPSSIPLSSHMRIIADKPSYVTMQTISDEYCKNRGMPLDYGIRFYFDRLQTGLIQLKRASASMLSNSTVEEKKQIFRQRALQLRMQLLETLNSSVFPESIYYDYFYKTFERYCDFWFFRRTFTTQYAYMIIMTYVFNIGGRSPQKLFIVKDSGQVMSQDLLPSMTSNQPVFHNTEAVPFRLTPPIQYLISDLGVEGLLSGLVMSIAQSLSSPTTDIKQYLSLYVRDEVFWWSKQQRKPIPQGIQLFETVKVNVELLFRRISVISHNVPEDLPLNQTLVDLVSQATNPQQLAQMDQLWQAWL</sequence>
<comment type="function">
    <text evidence="8 9">Component of the NuA4 histone H4/H2A acetyltransferase involved in transcription and DNA repair.</text>
</comment>
<comment type="subunit">
    <text evidence="7 8 9 10">Component of the NuA4 acetyltransferase complex. Tra1 is the scaffold subunit for binding to a variety of transcription activators or transcription factors to recruit NuA4 for targeted gene activation (PubMed:19040720, PubMed:21642955). Requires Hsp90 and its co-chaperone, the Triple-T complex (TTT), for its incorporation into NuA4 (PubMed:31748520). Interacts with tel2 (PubMed:18076573).</text>
</comment>
<comment type="miscellaneous">
    <text evidence="13">Although strongly related to the PI3/PI4-kinase family, it lacks the typical motifs that constitute the catalytic site of PI3/PI4-kinase proteins, suggesting that it may lack such activity.</text>
</comment>
<comment type="similarity">
    <text evidence="12">Belongs to the PI3/PI4-kinase family. TRA1 subfamily.</text>
</comment>
<proteinExistence type="evidence at protein level"/>
<keyword id="KW-0010">Activator</keyword>
<keyword id="KW-1185">Reference proteome</keyword>
<keyword id="KW-0677">Repeat</keyword>
<keyword id="KW-0804">Transcription</keyword>
<keyword id="KW-0805">Transcription regulation</keyword>
<dbReference type="EMBL" id="CU329670">
    <property type="protein sequence ID" value="CAA92239.1"/>
    <property type="molecule type" value="Genomic_DNA"/>
</dbReference>
<dbReference type="PIR" id="T38084">
    <property type="entry name" value="T38084"/>
</dbReference>
<dbReference type="SMR" id="Q10064"/>
<dbReference type="BioGRID" id="278155">
    <property type="interactions" value="14"/>
</dbReference>
<dbReference type="FunCoup" id="Q10064">
    <property type="interactions" value="511"/>
</dbReference>
<dbReference type="IntAct" id="Q10064">
    <property type="interactions" value="11"/>
</dbReference>
<dbReference type="MINT" id="Q10064"/>
<dbReference type="STRING" id="284812.Q10064"/>
<dbReference type="iPTMnet" id="Q10064"/>
<dbReference type="PaxDb" id="4896-SPAC1F5.11c.1"/>
<dbReference type="EnsemblFungi" id="SPAC1F5.11c.1">
    <property type="protein sequence ID" value="SPAC1F5.11c.1:pep"/>
    <property type="gene ID" value="SPAC1F5.11c"/>
</dbReference>
<dbReference type="KEGG" id="spo:2541659"/>
<dbReference type="PomBase" id="SPAC1F5.11c"/>
<dbReference type="VEuPathDB" id="FungiDB:SPAC1F5.11c"/>
<dbReference type="eggNOG" id="KOG0889">
    <property type="taxonomic scope" value="Eukaryota"/>
</dbReference>
<dbReference type="HOGENOM" id="CLU_000129_1_0_1"/>
<dbReference type="InParanoid" id="Q10064"/>
<dbReference type="OMA" id="NEWNQMQ"/>
<dbReference type="PhylomeDB" id="Q10064"/>
<dbReference type="PRO" id="PR:Q10064"/>
<dbReference type="Proteomes" id="UP000002485">
    <property type="component" value="Chromosome I"/>
</dbReference>
<dbReference type="GO" id="GO:0035267">
    <property type="term" value="C:NuA4 histone acetyltransferase complex"/>
    <property type="evidence" value="ECO:0000314"/>
    <property type="project" value="PomBase"/>
</dbReference>
<dbReference type="GO" id="GO:0005634">
    <property type="term" value="C:nucleus"/>
    <property type="evidence" value="ECO:0000318"/>
    <property type="project" value="GO_Central"/>
</dbReference>
<dbReference type="GO" id="GO:0000812">
    <property type="term" value="C:Swr1 complex"/>
    <property type="evidence" value="ECO:0000314"/>
    <property type="project" value="PomBase"/>
</dbReference>
<dbReference type="GO" id="GO:0016301">
    <property type="term" value="F:kinase activity"/>
    <property type="evidence" value="ECO:0007669"/>
    <property type="project" value="UniProtKB-KW"/>
</dbReference>
<dbReference type="GO" id="GO:0005198">
    <property type="term" value="F:structural molecule activity"/>
    <property type="evidence" value="ECO:0000269"/>
    <property type="project" value="PomBase"/>
</dbReference>
<dbReference type="GO" id="GO:0140861">
    <property type="term" value="P:DNA repair-dependent chromatin remodeling"/>
    <property type="evidence" value="ECO:0000318"/>
    <property type="project" value="GO_Central"/>
</dbReference>
<dbReference type="CDD" id="cd05163">
    <property type="entry name" value="PIKK_TRRAP"/>
    <property type="match status" value="1"/>
</dbReference>
<dbReference type="Gene3D" id="1.10.1070.11">
    <property type="entry name" value="Phosphatidylinositol 3-/4-kinase, catalytic domain"/>
    <property type="match status" value="1"/>
</dbReference>
<dbReference type="InterPro" id="IPR016024">
    <property type="entry name" value="ARM-type_fold"/>
</dbReference>
<dbReference type="InterPro" id="IPR050517">
    <property type="entry name" value="DDR_Repair_Kinase"/>
</dbReference>
<dbReference type="InterPro" id="IPR003152">
    <property type="entry name" value="FATC_dom"/>
</dbReference>
<dbReference type="InterPro" id="IPR011009">
    <property type="entry name" value="Kinase-like_dom_sf"/>
</dbReference>
<dbReference type="InterPro" id="IPR000403">
    <property type="entry name" value="PI3/4_kinase_cat_dom"/>
</dbReference>
<dbReference type="InterPro" id="IPR036940">
    <property type="entry name" value="PI3/4_kinase_cat_sf"/>
</dbReference>
<dbReference type="InterPro" id="IPR003151">
    <property type="entry name" value="PIK-rel_kinase_FAT"/>
</dbReference>
<dbReference type="InterPro" id="IPR014009">
    <property type="entry name" value="PIK_FAT"/>
</dbReference>
<dbReference type="InterPro" id="IPR046807">
    <property type="entry name" value="Tra1_central"/>
</dbReference>
<dbReference type="InterPro" id="IPR046805">
    <property type="entry name" value="Tra1_ring"/>
</dbReference>
<dbReference type="PANTHER" id="PTHR11139">
    <property type="entry name" value="ATAXIA TELANGIECTASIA MUTATED ATM -RELATED"/>
    <property type="match status" value="1"/>
</dbReference>
<dbReference type="PANTHER" id="PTHR11139:SF1">
    <property type="entry name" value="TRANSFORMATION_TRANSCRIPTION DOMAIN-ASSOCIATED PROTEIN"/>
    <property type="match status" value="1"/>
</dbReference>
<dbReference type="Pfam" id="PF02259">
    <property type="entry name" value="FAT"/>
    <property type="match status" value="1"/>
</dbReference>
<dbReference type="Pfam" id="PF02260">
    <property type="entry name" value="FATC"/>
    <property type="match status" value="1"/>
</dbReference>
<dbReference type="Pfam" id="PF00454">
    <property type="entry name" value="PI3_PI4_kinase"/>
    <property type="match status" value="1"/>
</dbReference>
<dbReference type="Pfam" id="PF20175">
    <property type="entry name" value="Tra1_central"/>
    <property type="match status" value="1"/>
</dbReference>
<dbReference type="Pfam" id="PF20206">
    <property type="entry name" value="Tra1_ring"/>
    <property type="match status" value="2"/>
</dbReference>
<dbReference type="SMART" id="SM01343">
    <property type="entry name" value="FATC"/>
    <property type="match status" value="1"/>
</dbReference>
<dbReference type="SMART" id="SM00146">
    <property type="entry name" value="PI3Kc"/>
    <property type="match status" value="1"/>
</dbReference>
<dbReference type="SUPFAM" id="SSF48371">
    <property type="entry name" value="ARM repeat"/>
    <property type="match status" value="3"/>
</dbReference>
<dbReference type="SUPFAM" id="SSF56112">
    <property type="entry name" value="Protein kinase-like (PK-like)"/>
    <property type="match status" value="1"/>
</dbReference>
<dbReference type="PROSITE" id="PS51189">
    <property type="entry name" value="FAT"/>
    <property type="match status" value="1"/>
</dbReference>
<dbReference type="PROSITE" id="PS51190">
    <property type="entry name" value="FATC"/>
    <property type="match status" value="1"/>
</dbReference>
<dbReference type="PROSITE" id="PS50290">
    <property type="entry name" value="PI3_4_KINASE_3"/>
    <property type="match status" value="1"/>
</dbReference>
<feature type="chain" id="PRO_0000088855" description="NuA4 acetyltransferase complex subunit Tra2">
    <location>
        <begin position="1"/>
        <end position="3655"/>
    </location>
</feature>
<feature type="repeat" description="HEAT 1" evidence="2">
    <location>
        <begin position="46"/>
        <end position="89"/>
    </location>
</feature>
<feature type="repeat" description="HEAT 2" evidence="2">
    <location>
        <begin position="94"/>
        <end position="131"/>
    </location>
</feature>
<feature type="repeat" description="HEAT 3" evidence="2">
    <location>
        <begin position="149"/>
        <end position="188"/>
    </location>
</feature>
<feature type="repeat" description="HEAT 4" evidence="2">
    <location>
        <begin position="230"/>
        <end position="268"/>
    </location>
</feature>
<feature type="repeat" description="HEAT 5" evidence="2">
    <location>
        <begin position="300"/>
        <end position="338"/>
    </location>
</feature>
<feature type="repeat" description="HEAT 6" evidence="2">
    <location>
        <begin position="374"/>
        <end position="412"/>
    </location>
</feature>
<feature type="repeat" description="HEAT 7" evidence="2">
    <location>
        <begin position="438"/>
        <end position="475"/>
    </location>
</feature>
<feature type="repeat" description="HEAT 8" evidence="2">
    <location>
        <begin position="606"/>
        <end position="643"/>
    </location>
</feature>
<feature type="repeat" description="HEAT 9" evidence="2">
    <location>
        <begin position="644"/>
        <end position="683"/>
    </location>
</feature>
<feature type="repeat" description="HEAT 10" evidence="2">
    <location>
        <begin position="735"/>
        <end position="772"/>
    </location>
</feature>
<feature type="repeat" description="HEAT 11" evidence="2">
    <location>
        <begin position="783"/>
        <end position="820"/>
    </location>
</feature>
<feature type="repeat" description="HEAT 12" evidence="2">
    <location>
        <begin position="828"/>
        <end position="867"/>
    </location>
</feature>
<feature type="repeat" description="HEAT 13" evidence="2">
    <location>
        <begin position="1100"/>
        <end position="1141"/>
    </location>
</feature>
<feature type="repeat" description="HEAT 14" evidence="2">
    <location>
        <begin position="1147"/>
        <end position="1184"/>
    </location>
</feature>
<feature type="repeat" description="HEAT 15" evidence="2">
    <location>
        <begin position="1193"/>
        <end position="1230"/>
    </location>
</feature>
<feature type="repeat" description="HEAT 16" evidence="2">
    <location>
        <begin position="1429"/>
        <end position="1470"/>
    </location>
</feature>
<feature type="repeat" description="HEAT 17" evidence="2">
    <location>
        <begin position="1665"/>
        <end position="1704"/>
    </location>
</feature>
<feature type="repeat" description="HEAT 18" evidence="2">
    <location>
        <begin position="1709"/>
        <end position="1746"/>
    </location>
</feature>
<feature type="repeat" description="HEAT 19" evidence="2">
    <location>
        <begin position="1753"/>
        <end position="1790"/>
    </location>
</feature>
<feature type="repeat" description="HEAT 20" evidence="2">
    <location>
        <begin position="1808"/>
        <end position="1846"/>
    </location>
</feature>
<feature type="repeat" description="HEAT 21" evidence="2">
    <location>
        <begin position="1891"/>
        <end position="1934"/>
    </location>
</feature>
<feature type="repeat" description="HEAT 22" evidence="2">
    <location>
        <begin position="1973"/>
        <end position="2011"/>
    </location>
</feature>
<feature type="repeat" description="HEAT 23" evidence="2">
    <location>
        <begin position="2036"/>
        <end position="2073"/>
    </location>
</feature>
<feature type="repeat" description="HEAT 24" evidence="2">
    <location>
        <begin position="2120"/>
        <end position="2157"/>
    </location>
</feature>
<feature type="repeat" description="HEAT 25" evidence="2">
    <location>
        <begin position="2183"/>
        <end position="2221"/>
    </location>
</feature>
<feature type="repeat" description="HEAT 26" evidence="2">
    <location>
        <begin position="2401"/>
        <end position="2438"/>
    </location>
</feature>
<feature type="domain" description="FAT" evidence="4">
    <location>
        <begin position="2484"/>
        <end position="3045"/>
    </location>
</feature>
<feature type="domain" description="PI3K/PI4K catalytic" evidence="3">
    <location>
        <begin position="3285"/>
        <end position="3625"/>
    </location>
</feature>
<feature type="domain" description="FATC" evidence="4 5">
    <location>
        <begin position="3623"/>
        <end position="3655"/>
    </location>
</feature>
<feature type="region of interest" description="HEAT" evidence="1">
    <location>
        <begin position="8"/>
        <end position="2459"/>
    </location>
</feature>
<feature type="region of interest" description="Head" evidence="1">
    <location>
        <begin position="2460"/>
        <end position="3655"/>
    </location>
</feature>
<feature type="region of interest" description="Disordered" evidence="6">
    <location>
        <begin position="3059"/>
        <end position="3105"/>
    </location>
</feature>
<feature type="region of interest" description="G-loop" evidence="3">
    <location>
        <begin position="3291"/>
        <end position="3297"/>
    </location>
</feature>
<feature type="region of interest" description="Catalytic loop" evidence="3">
    <location>
        <begin position="3491"/>
        <end position="3499"/>
    </location>
</feature>
<feature type="region of interest" description="Activation loop" evidence="3">
    <location>
        <begin position="3511"/>
        <end position="3536"/>
    </location>
</feature>
<feature type="compositionally biased region" description="Basic and acidic residues" evidence="6">
    <location>
        <begin position="3063"/>
        <end position="3077"/>
    </location>
</feature>
<feature type="compositionally biased region" description="Low complexity" evidence="6">
    <location>
        <begin position="3078"/>
        <end position="3092"/>
    </location>
</feature>
<organism>
    <name type="scientific">Schizosaccharomyces pombe (strain 972 / ATCC 24843)</name>
    <name type="common">Fission yeast</name>
    <dbReference type="NCBI Taxonomy" id="284812"/>
    <lineage>
        <taxon>Eukaryota</taxon>
        <taxon>Fungi</taxon>
        <taxon>Dikarya</taxon>
        <taxon>Ascomycota</taxon>
        <taxon>Taphrinomycotina</taxon>
        <taxon>Schizosaccharomycetes</taxon>
        <taxon>Schizosaccharomycetales</taxon>
        <taxon>Schizosaccharomycetaceae</taxon>
        <taxon>Schizosaccharomyces</taxon>
    </lineage>
</organism>
<name>TRA2_SCHPO</name>
<gene>
    <name evidence="11" type="primary">tra2</name>
    <name type="ORF">SPAC1F5.11c</name>
</gene>
<evidence type="ECO:0000250" key="1">
    <source>
        <dbReference type="UniProtKB" id="P38811"/>
    </source>
</evidence>
<evidence type="ECO:0000255" key="2"/>
<evidence type="ECO:0000255" key="3">
    <source>
        <dbReference type="PROSITE-ProRule" id="PRU00269"/>
    </source>
</evidence>
<evidence type="ECO:0000255" key="4">
    <source>
        <dbReference type="PROSITE-ProRule" id="PRU00534"/>
    </source>
</evidence>
<evidence type="ECO:0000255" key="5">
    <source>
        <dbReference type="PROSITE-ProRule" id="PRU00535"/>
    </source>
</evidence>
<evidence type="ECO:0000256" key="6">
    <source>
        <dbReference type="SAM" id="MobiDB-lite"/>
    </source>
</evidence>
<evidence type="ECO:0000269" key="7">
    <source>
    </source>
</evidence>
<evidence type="ECO:0000269" key="8">
    <source>
    </source>
</evidence>
<evidence type="ECO:0000269" key="9">
    <source>
    </source>
</evidence>
<evidence type="ECO:0000269" key="10">
    <source>
    </source>
</evidence>
<evidence type="ECO:0000303" key="11">
    <source>
    </source>
</evidence>
<evidence type="ECO:0000305" key="12"/>
<evidence type="ECO:0000305" key="13">
    <source>
    </source>
</evidence>
<reference key="1">
    <citation type="journal article" date="2002" name="Nature">
        <title>The genome sequence of Schizosaccharomyces pombe.</title>
        <authorList>
            <person name="Wood V."/>
            <person name="Gwilliam R."/>
            <person name="Rajandream M.A."/>
            <person name="Lyne M.H."/>
            <person name="Lyne R."/>
            <person name="Stewart A."/>
            <person name="Sgouros J.G."/>
            <person name="Peat N."/>
            <person name="Hayles J."/>
            <person name="Baker S.G."/>
            <person name="Basham D."/>
            <person name="Bowman S."/>
            <person name="Brooks K."/>
            <person name="Brown D."/>
            <person name="Brown S."/>
            <person name="Chillingworth T."/>
            <person name="Churcher C.M."/>
            <person name="Collins M."/>
            <person name="Connor R."/>
            <person name="Cronin A."/>
            <person name="Davis P."/>
            <person name="Feltwell T."/>
            <person name="Fraser A."/>
            <person name="Gentles S."/>
            <person name="Goble A."/>
            <person name="Hamlin N."/>
            <person name="Harris D.E."/>
            <person name="Hidalgo J."/>
            <person name="Hodgson G."/>
            <person name="Holroyd S."/>
            <person name="Hornsby T."/>
            <person name="Howarth S."/>
            <person name="Huckle E.J."/>
            <person name="Hunt S."/>
            <person name="Jagels K."/>
            <person name="James K.D."/>
            <person name="Jones L."/>
            <person name="Jones M."/>
            <person name="Leather S."/>
            <person name="McDonald S."/>
            <person name="McLean J."/>
            <person name="Mooney P."/>
            <person name="Moule S."/>
            <person name="Mungall K.L."/>
            <person name="Murphy L.D."/>
            <person name="Niblett D."/>
            <person name="Odell C."/>
            <person name="Oliver K."/>
            <person name="O'Neil S."/>
            <person name="Pearson D."/>
            <person name="Quail M.A."/>
            <person name="Rabbinowitsch E."/>
            <person name="Rutherford K.M."/>
            <person name="Rutter S."/>
            <person name="Saunders D."/>
            <person name="Seeger K."/>
            <person name="Sharp S."/>
            <person name="Skelton J."/>
            <person name="Simmonds M.N."/>
            <person name="Squares R."/>
            <person name="Squares S."/>
            <person name="Stevens K."/>
            <person name="Taylor K."/>
            <person name="Taylor R.G."/>
            <person name="Tivey A."/>
            <person name="Walsh S.V."/>
            <person name="Warren T."/>
            <person name="Whitehead S."/>
            <person name="Woodward J.R."/>
            <person name="Volckaert G."/>
            <person name="Aert R."/>
            <person name="Robben J."/>
            <person name="Grymonprez B."/>
            <person name="Weltjens I."/>
            <person name="Vanstreels E."/>
            <person name="Rieger M."/>
            <person name="Schaefer M."/>
            <person name="Mueller-Auer S."/>
            <person name="Gabel C."/>
            <person name="Fuchs M."/>
            <person name="Duesterhoeft A."/>
            <person name="Fritzc C."/>
            <person name="Holzer E."/>
            <person name="Moestl D."/>
            <person name="Hilbert H."/>
            <person name="Borzym K."/>
            <person name="Langer I."/>
            <person name="Beck A."/>
            <person name="Lehrach H."/>
            <person name="Reinhardt R."/>
            <person name="Pohl T.M."/>
            <person name="Eger P."/>
            <person name="Zimmermann W."/>
            <person name="Wedler H."/>
            <person name="Wambutt R."/>
            <person name="Purnelle B."/>
            <person name="Goffeau A."/>
            <person name="Cadieu E."/>
            <person name="Dreano S."/>
            <person name="Gloux S."/>
            <person name="Lelaure V."/>
            <person name="Mottier S."/>
            <person name="Galibert F."/>
            <person name="Aves S.J."/>
            <person name="Xiang Z."/>
            <person name="Hunt C."/>
            <person name="Moore K."/>
            <person name="Hurst S.M."/>
            <person name="Lucas M."/>
            <person name="Rochet M."/>
            <person name="Gaillardin C."/>
            <person name="Tallada V.A."/>
            <person name="Garzon A."/>
            <person name="Thode G."/>
            <person name="Daga R.R."/>
            <person name="Cruzado L."/>
            <person name="Jimenez J."/>
            <person name="Sanchez M."/>
            <person name="del Rey F."/>
            <person name="Benito J."/>
            <person name="Dominguez A."/>
            <person name="Revuelta J.L."/>
            <person name="Moreno S."/>
            <person name="Armstrong J."/>
            <person name="Forsburg S.L."/>
            <person name="Cerutti L."/>
            <person name="Lowe T."/>
            <person name="McCombie W.R."/>
            <person name="Paulsen I."/>
            <person name="Potashkin J."/>
            <person name="Shpakovski G.V."/>
            <person name="Ussery D."/>
            <person name="Barrell B.G."/>
            <person name="Nurse P."/>
        </authorList>
    </citation>
    <scope>NUCLEOTIDE SEQUENCE [LARGE SCALE GENOMIC DNA]</scope>
    <source>
        <strain>972 / ATCC 24843</strain>
    </source>
</reference>
<reference key="2">
    <citation type="journal article" date="2007" name="Genes Cells">
        <title>Rapamycin sensitivity of the Schizosaccharomyces pombe tor2 mutant and organization of two highly phosphorylated TOR complexes by specific and common subunits.</title>
        <authorList>
            <person name="Hayashi T."/>
            <person name="Hatanaka M."/>
            <person name="Nagao K."/>
            <person name="Nakaseko Y."/>
            <person name="Kanoh J."/>
            <person name="Kokubu A."/>
            <person name="Ebe M."/>
            <person name="Yanagida M."/>
        </authorList>
    </citation>
    <scope>INTERACTION WITH TEL2</scope>
</reference>
<reference key="3">
    <citation type="journal article" date="2008" name="Genome Biol.">
        <title>Chromatin Central: towards the comparative proteome by accurate mapping of the yeast proteomic environment.</title>
        <authorList>
            <person name="Shevchenko A."/>
            <person name="Roguev A."/>
            <person name="Schaft D."/>
            <person name="Buchanan L."/>
            <person name="Habermann B."/>
            <person name="Sakalar C."/>
            <person name="Thomas H."/>
            <person name="Krogan N.J."/>
            <person name="Shevchenko A."/>
            <person name="Stewart A.F."/>
        </authorList>
    </citation>
    <scope>IDENTIFICATION IN THE NUA4 COMPLEX</scope>
    <scope>IDENTIFICATION BY MASS SPECTROMETRY</scope>
</reference>
<reference key="4">
    <citation type="journal article" date="2011" name="EMBO J.">
        <title>Tra1 has specific regulatory roles, rather than global functions, within the SAGA co-activator complex.</title>
        <authorList>
            <person name="Helmlinger D."/>
            <person name="Marguerat S."/>
            <person name="Villen J."/>
            <person name="Swaney D.L."/>
            <person name="Gygi S.P."/>
            <person name="Bahler J."/>
            <person name="Winston F."/>
        </authorList>
    </citation>
    <scope>IDENTIFICATION IN THE NUA4 COMPLEX</scope>
    <scope>IDENTIFICATION BY MASS SPECTROMETRY</scope>
</reference>
<reference key="5">
    <citation type="journal article" date="2019" name="Nat. Commun.">
        <title>Chaperone-mediated ordered assembly of the SAGA and NuA4 transcription co-activator complexes in yeast.</title>
        <authorList>
            <person name="Elias-Villalobos A."/>
            <person name="Toullec D."/>
            <person name="Faux C."/>
            <person name="Seveno M."/>
            <person name="Helmlinger D."/>
        </authorList>
    </citation>
    <scope>SUBUNIT</scope>
</reference>
<accession>Q10064</accession>